<organism>
    <name type="scientific">Escherichia coli (strain K12)</name>
    <dbReference type="NCBI Taxonomy" id="83333"/>
    <lineage>
        <taxon>Bacteria</taxon>
        <taxon>Pseudomonadati</taxon>
        <taxon>Pseudomonadota</taxon>
        <taxon>Gammaproteobacteria</taxon>
        <taxon>Enterobacterales</taxon>
        <taxon>Enterobacteriaceae</taxon>
        <taxon>Escherichia</taxon>
    </lineage>
</organism>
<dbReference type="EMBL" id="U00096">
    <property type="protein sequence ID" value="AAC75132.1"/>
    <property type="molecule type" value="Genomic_DNA"/>
</dbReference>
<dbReference type="EMBL" id="AP009048">
    <property type="protein sequence ID" value="BAE76578.1"/>
    <property type="molecule type" value="Genomic_DNA"/>
</dbReference>
<dbReference type="PIR" id="F64973">
    <property type="entry name" value="F64973"/>
</dbReference>
<dbReference type="RefSeq" id="NP_416575.1">
    <property type="nucleotide sequence ID" value="NC_000913.3"/>
</dbReference>
<dbReference type="RefSeq" id="WP_000722348.1">
    <property type="nucleotide sequence ID" value="NZ_LN832404.1"/>
</dbReference>
<dbReference type="SMR" id="P76394"/>
<dbReference type="BioGRID" id="4259693">
    <property type="interactions" value="3"/>
</dbReference>
<dbReference type="DIP" id="DIP-11880N"/>
<dbReference type="FunCoup" id="P76394">
    <property type="interactions" value="12"/>
</dbReference>
<dbReference type="IntAct" id="P76394">
    <property type="interactions" value="1"/>
</dbReference>
<dbReference type="STRING" id="511145.b2071"/>
<dbReference type="PaxDb" id="511145-b2071"/>
<dbReference type="EnsemblBacteria" id="AAC75132">
    <property type="protein sequence ID" value="AAC75132"/>
    <property type="gene ID" value="b2071"/>
</dbReference>
<dbReference type="GeneID" id="947201"/>
<dbReference type="KEGG" id="ecj:JW2056"/>
<dbReference type="KEGG" id="eco:b2071"/>
<dbReference type="KEGG" id="ecoc:C3026_11650"/>
<dbReference type="PATRIC" id="fig|511145.12.peg.2148"/>
<dbReference type="EchoBASE" id="EB3806"/>
<dbReference type="eggNOG" id="COG3779">
    <property type="taxonomic scope" value="Bacteria"/>
</dbReference>
<dbReference type="HOGENOM" id="CLU_129853_1_0_6"/>
<dbReference type="InParanoid" id="P76394"/>
<dbReference type="OMA" id="AKAHEKS"/>
<dbReference type="OrthoDB" id="6571369at2"/>
<dbReference type="PhylomeDB" id="P76394"/>
<dbReference type="BioCyc" id="EcoCyc:G7110-MONOMER"/>
<dbReference type="PRO" id="PR:P76394"/>
<dbReference type="Proteomes" id="UP000000625">
    <property type="component" value="Chromosome"/>
</dbReference>
<dbReference type="InterPro" id="IPR018756">
    <property type="entry name" value="DUF2314"/>
</dbReference>
<dbReference type="Pfam" id="PF10077">
    <property type="entry name" value="DUF2314"/>
    <property type="match status" value="1"/>
</dbReference>
<gene>
    <name type="primary">yegJ</name>
    <name type="ordered locus">b2071</name>
    <name type="ordered locus">JW2056</name>
</gene>
<accession>P76394</accession>
<accession>Q2MAX8</accession>
<proteinExistence type="predicted"/>
<keyword id="KW-1185">Reference proteome</keyword>
<protein>
    <recommendedName>
        <fullName>Uncharacterized protein YegJ</fullName>
    </recommendedName>
</protein>
<name>YEGJ_ECOLI</name>
<feature type="chain" id="PRO_0000169125" description="Uncharacterized protein YegJ">
    <location>
        <begin position="1"/>
        <end position="153"/>
    </location>
</feature>
<reference key="1">
    <citation type="journal article" date="1997" name="Science">
        <title>The complete genome sequence of Escherichia coli K-12.</title>
        <authorList>
            <person name="Blattner F.R."/>
            <person name="Plunkett G. III"/>
            <person name="Bloch C.A."/>
            <person name="Perna N.T."/>
            <person name="Burland V."/>
            <person name="Riley M."/>
            <person name="Collado-Vides J."/>
            <person name="Glasner J.D."/>
            <person name="Rode C.K."/>
            <person name="Mayhew G.F."/>
            <person name="Gregor J."/>
            <person name="Davis N.W."/>
            <person name="Kirkpatrick H.A."/>
            <person name="Goeden M.A."/>
            <person name="Rose D.J."/>
            <person name="Mau B."/>
            <person name="Shao Y."/>
        </authorList>
    </citation>
    <scope>NUCLEOTIDE SEQUENCE [LARGE SCALE GENOMIC DNA]</scope>
    <source>
        <strain>K12 / MG1655 / ATCC 47076</strain>
    </source>
</reference>
<reference key="2">
    <citation type="journal article" date="2006" name="Mol. Syst. Biol.">
        <title>Highly accurate genome sequences of Escherichia coli K-12 strains MG1655 and W3110.</title>
        <authorList>
            <person name="Hayashi K."/>
            <person name="Morooka N."/>
            <person name="Yamamoto Y."/>
            <person name="Fujita K."/>
            <person name="Isono K."/>
            <person name="Choi S."/>
            <person name="Ohtsubo E."/>
            <person name="Baba T."/>
            <person name="Wanner B.L."/>
            <person name="Mori H."/>
            <person name="Horiuchi T."/>
        </authorList>
    </citation>
    <scope>NUCLEOTIDE SEQUENCE [LARGE SCALE GENOMIC DNA]</scope>
    <source>
        <strain>K12 / W3110 / ATCC 27325 / DSM 5911</strain>
    </source>
</reference>
<sequence length="153" mass="17428">MKKILLMLSLLFFTTAGFSEVSDTLVTGGYDKQAMSDAIKHARKETDKFIEVMNKKDADTFAVKAPITDHGRTEHFWLTDVTYSNGMFIGVISNDPGIVTNVEYGQEWKIKKEDISDWMYTRGDKIYGGYTIDPLLVTYPKEEADELRAKLVR</sequence>